<protein>
    <recommendedName>
        <fullName evidence="1">Peptide chain release factor 2</fullName>
        <shortName evidence="1">RF-2</shortName>
    </recommendedName>
</protein>
<proteinExistence type="inferred from homology"/>
<name>RF2_LEPIN</name>
<organism>
    <name type="scientific">Leptospira interrogans serogroup Icterohaemorrhagiae serovar Lai (strain 56601)</name>
    <dbReference type="NCBI Taxonomy" id="189518"/>
    <lineage>
        <taxon>Bacteria</taxon>
        <taxon>Pseudomonadati</taxon>
        <taxon>Spirochaetota</taxon>
        <taxon>Spirochaetia</taxon>
        <taxon>Leptospirales</taxon>
        <taxon>Leptospiraceae</taxon>
        <taxon>Leptospira</taxon>
    </lineage>
</organism>
<dbReference type="EMBL" id="AE010300">
    <property type="protein sequence ID" value="AAN50965.1"/>
    <property type="molecule type" value="Genomic_DNA"/>
</dbReference>
<dbReference type="RefSeq" id="NP_713947.1">
    <property type="nucleotide sequence ID" value="NC_004342.2"/>
</dbReference>
<dbReference type="RefSeq" id="WP_000453255.1">
    <property type="nucleotide sequence ID" value="NC_004342.2"/>
</dbReference>
<dbReference type="SMR" id="Q8EZT4"/>
<dbReference type="FunCoup" id="Q8EZT4">
    <property type="interactions" value="453"/>
</dbReference>
<dbReference type="STRING" id="189518.LA_3767"/>
<dbReference type="PaxDb" id="189518-LA_3767"/>
<dbReference type="EnsemblBacteria" id="AAN50965">
    <property type="protein sequence ID" value="AAN50965"/>
    <property type="gene ID" value="LA_3767"/>
</dbReference>
<dbReference type="KEGG" id="lil:LA_3767"/>
<dbReference type="PATRIC" id="fig|189518.3.peg.3739"/>
<dbReference type="HOGENOM" id="CLU_036856_6_0_12"/>
<dbReference type="InParanoid" id="Q8EZT4"/>
<dbReference type="OrthoDB" id="9806673at2"/>
<dbReference type="Proteomes" id="UP000001408">
    <property type="component" value="Chromosome I"/>
</dbReference>
<dbReference type="GO" id="GO:0005737">
    <property type="term" value="C:cytoplasm"/>
    <property type="evidence" value="ECO:0007669"/>
    <property type="project" value="UniProtKB-SubCell"/>
</dbReference>
<dbReference type="GO" id="GO:0016149">
    <property type="term" value="F:translation release factor activity, codon specific"/>
    <property type="evidence" value="ECO:0007669"/>
    <property type="project" value="UniProtKB-UniRule"/>
</dbReference>
<dbReference type="FunFam" id="3.30.160.20:FF:000010">
    <property type="entry name" value="Peptide chain release factor 2"/>
    <property type="match status" value="1"/>
</dbReference>
<dbReference type="Gene3D" id="3.30.160.20">
    <property type="match status" value="1"/>
</dbReference>
<dbReference type="Gene3D" id="3.30.70.1660">
    <property type="match status" value="1"/>
</dbReference>
<dbReference type="Gene3D" id="1.20.58.410">
    <property type="entry name" value="Release factor"/>
    <property type="match status" value="1"/>
</dbReference>
<dbReference type="HAMAP" id="MF_00094">
    <property type="entry name" value="Rel_fac_2"/>
    <property type="match status" value="1"/>
</dbReference>
<dbReference type="InterPro" id="IPR005139">
    <property type="entry name" value="PCRF"/>
</dbReference>
<dbReference type="InterPro" id="IPR000352">
    <property type="entry name" value="Pep_chain_release_fac_I"/>
</dbReference>
<dbReference type="InterPro" id="IPR045853">
    <property type="entry name" value="Pep_chain_release_fac_I_sf"/>
</dbReference>
<dbReference type="InterPro" id="IPR004374">
    <property type="entry name" value="PrfB"/>
</dbReference>
<dbReference type="NCBIfam" id="TIGR00020">
    <property type="entry name" value="prfB"/>
    <property type="match status" value="1"/>
</dbReference>
<dbReference type="PANTHER" id="PTHR43116:SF3">
    <property type="entry name" value="CLASS I PEPTIDE CHAIN RELEASE FACTOR"/>
    <property type="match status" value="1"/>
</dbReference>
<dbReference type="PANTHER" id="PTHR43116">
    <property type="entry name" value="PEPTIDE CHAIN RELEASE FACTOR 2"/>
    <property type="match status" value="1"/>
</dbReference>
<dbReference type="Pfam" id="PF03462">
    <property type="entry name" value="PCRF"/>
    <property type="match status" value="1"/>
</dbReference>
<dbReference type="Pfam" id="PF00472">
    <property type="entry name" value="RF-1"/>
    <property type="match status" value="1"/>
</dbReference>
<dbReference type="SMART" id="SM00937">
    <property type="entry name" value="PCRF"/>
    <property type="match status" value="1"/>
</dbReference>
<dbReference type="SUPFAM" id="SSF75620">
    <property type="entry name" value="Release factor"/>
    <property type="match status" value="1"/>
</dbReference>
<dbReference type="PROSITE" id="PS00745">
    <property type="entry name" value="RF_PROK_I"/>
    <property type="match status" value="1"/>
</dbReference>
<comment type="function">
    <text evidence="1">Peptide chain release factor 2 directs the termination of translation in response to the peptide chain termination codons UGA and UAA.</text>
</comment>
<comment type="subcellular location">
    <subcellularLocation>
        <location evidence="1">Cytoplasm</location>
    </subcellularLocation>
</comment>
<comment type="PTM">
    <text evidence="1">Methylated by PrmC. Methylation increases the termination efficiency of RF2.</text>
</comment>
<comment type="similarity">
    <text evidence="1">Belongs to the prokaryotic/mitochondrial release factor family.</text>
</comment>
<gene>
    <name evidence="1" type="primary">prfB</name>
    <name type="ordered locus">LA_3767</name>
</gene>
<feature type="chain" id="PRO_0000166826" description="Peptide chain release factor 2">
    <location>
        <begin position="1"/>
        <end position="367"/>
    </location>
</feature>
<feature type="modified residue" description="N5-methylglutamine" evidence="1">
    <location>
        <position position="254"/>
    </location>
</feature>
<reference key="1">
    <citation type="journal article" date="2003" name="Nature">
        <title>Unique physiological and pathogenic features of Leptospira interrogans revealed by whole-genome sequencing.</title>
        <authorList>
            <person name="Ren S.-X."/>
            <person name="Fu G."/>
            <person name="Jiang X.-G."/>
            <person name="Zeng R."/>
            <person name="Miao Y.-G."/>
            <person name="Xu H."/>
            <person name="Zhang Y.-X."/>
            <person name="Xiong H."/>
            <person name="Lu G."/>
            <person name="Lu L.-F."/>
            <person name="Jiang H.-Q."/>
            <person name="Jia J."/>
            <person name="Tu Y.-F."/>
            <person name="Jiang J.-X."/>
            <person name="Gu W.-Y."/>
            <person name="Zhang Y.-Q."/>
            <person name="Cai Z."/>
            <person name="Sheng H.-H."/>
            <person name="Yin H.-F."/>
            <person name="Zhang Y."/>
            <person name="Zhu G.-F."/>
            <person name="Wan M."/>
            <person name="Huang H.-L."/>
            <person name="Qian Z."/>
            <person name="Wang S.-Y."/>
            <person name="Ma W."/>
            <person name="Yao Z.-J."/>
            <person name="Shen Y."/>
            <person name="Qiang B.-Q."/>
            <person name="Xia Q.-C."/>
            <person name="Guo X.-K."/>
            <person name="Danchin A."/>
            <person name="Saint Girons I."/>
            <person name="Somerville R.L."/>
            <person name="Wen Y.-M."/>
            <person name="Shi M.-H."/>
            <person name="Chen Z."/>
            <person name="Xu J.-G."/>
            <person name="Zhao G.-P."/>
        </authorList>
    </citation>
    <scope>NUCLEOTIDE SEQUENCE [LARGE SCALE GENOMIC DNA]</scope>
    <source>
        <strain>56601</strain>
    </source>
</reference>
<sequence>MEVKSAKELKRISKELQENFLNRWKLLNLEQDKDRLKSLTEKAEDPNLWNNPEEARLVSQKKNELEKKLNPWFTIQQDILDFPDLVDLTLDEKGENGVGELSSEYNRLQEKFEELELLGALKNPEDLKPAFLNIHPGAGGTESQDWAEMLLRMYTRYFEKKGYQYSLIDVQAGDGAGIKNATLHVIGDFAFGFLKGENGVHRLVRISPFDANKRRHTSFVSVHVSPEIDDDIDIKIEEKDIRVDVYRSSGAGGQHVNTTDSAVRITHMPSGIVVACQNERSQIKNRDTAFKMLKARLYELEQEKAKEELEKKSGEKKDIAWGSQIRSYVFHPYNLVKDHRTDHETGNVAAVMDGDIEPFILAYLKTL</sequence>
<evidence type="ECO:0000255" key="1">
    <source>
        <dbReference type="HAMAP-Rule" id="MF_00094"/>
    </source>
</evidence>
<accession>Q8EZT4</accession>
<keyword id="KW-0963">Cytoplasm</keyword>
<keyword id="KW-0488">Methylation</keyword>
<keyword id="KW-0648">Protein biosynthesis</keyword>
<keyword id="KW-1185">Reference proteome</keyword>